<organism>
    <name type="scientific">Clostridium acetobutylicum (strain ATCC 824 / DSM 792 / JCM 1419 / IAM 19013 / LMG 5710 / NBRC 13948 / NRRL B-527 / VKM B-1787 / 2291 / W)</name>
    <dbReference type="NCBI Taxonomy" id="272562"/>
    <lineage>
        <taxon>Bacteria</taxon>
        <taxon>Bacillati</taxon>
        <taxon>Bacillota</taxon>
        <taxon>Clostridia</taxon>
        <taxon>Eubacteriales</taxon>
        <taxon>Clostridiaceae</taxon>
        <taxon>Clostridium</taxon>
    </lineage>
</organism>
<protein>
    <recommendedName>
        <fullName evidence="1">Galactose-6-phosphate isomerase subunit LacA</fullName>
        <ecNumber evidence="1">5.3.1.26</ecNumber>
    </recommendedName>
</protein>
<proteinExistence type="inferred from homology"/>
<dbReference type="EC" id="5.3.1.26" evidence="1"/>
<dbReference type="EMBL" id="AE001437">
    <property type="protein sequence ID" value="AAK80896.1"/>
    <property type="molecule type" value="Genomic_DNA"/>
</dbReference>
<dbReference type="PIR" id="E97263">
    <property type="entry name" value="E97263"/>
</dbReference>
<dbReference type="RefSeq" id="NP_349556.1">
    <property type="nucleotide sequence ID" value="NC_003030.1"/>
</dbReference>
<dbReference type="RefSeq" id="WP_010966237.1">
    <property type="nucleotide sequence ID" value="NC_003030.1"/>
</dbReference>
<dbReference type="SMR" id="Q97F01"/>
<dbReference type="STRING" id="272562.CA_C2954"/>
<dbReference type="GeneID" id="44999442"/>
<dbReference type="KEGG" id="cac:CA_C2954"/>
<dbReference type="PATRIC" id="fig|272562.8.peg.3138"/>
<dbReference type="eggNOG" id="COG0698">
    <property type="taxonomic scope" value="Bacteria"/>
</dbReference>
<dbReference type="HOGENOM" id="CLU_091396_4_2_9"/>
<dbReference type="OrthoDB" id="1778624at2"/>
<dbReference type="UniPathway" id="UPA00702">
    <property type="reaction ID" value="UER00714"/>
</dbReference>
<dbReference type="Proteomes" id="UP000000814">
    <property type="component" value="Chromosome"/>
</dbReference>
<dbReference type="GO" id="GO:0050044">
    <property type="term" value="F:galactose-6-phosphate isomerase activity"/>
    <property type="evidence" value="ECO:0007669"/>
    <property type="project" value="UniProtKB-UniRule"/>
</dbReference>
<dbReference type="GO" id="GO:0004751">
    <property type="term" value="F:ribose-5-phosphate isomerase activity"/>
    <property type="evidence" value="ECO:0007669"/>
    <property type="project" value="TreeGrafter"/>
</dbReference>
<dbReference type="GO" id="GO:0019316">
    <property type="term" value="P:D-allose catabolic process"/>
    <property type="evidence" value="ECO:0007669"/>
    <property type="project" value="TreeGrafter"/>
</dbReference>
<dbReference type="GO" id="GO:0019388">
    <property type="term" value="P:galactose catabolic process"/>
    <property type="evidence" value="ECO:0007669"/>
    <property type="project" value="UniProtKB-UniPathway"/>
</dbReference>
<dbReference type="GO" id="GO:0019512">
    <property type="term" value="P:lactose catabolic process via tagatose-6-phosphate"/>
    <property type="evidence" value="ECO:0007669"/>
    <property type="project" value="UniProtKB-UniRule"/>
</dbReference>
<dbReference type="GO" id="GO:0009052">
    <property type="term" value="P:pentose-phosphate shunt, non-oxidative branch"/>
    <property type="evidence" value="ECO:0007669"/>
    <property type="project" value="TreeGrafter"/>
</dbReference>
<dbReference type="Gene3D" id="3.40.1400.10">
    <property type="entry name" value="Sugar-phosphate isomerase, RpiB/LacA/LacB"/>
    <property type="match status" value="1"/>
</dbReference>
<dbReference type="HAMAP" id="MF_01555">
    <property type="entry name" value="LacA"/>
    <property type="match status" value="1"/>
</dbReference>
<dbReference type="InterPro" id="IPR004783">
    <property type="entry name" value="LacA"/>
</dbReference>
<dbReference type="InterPro" id="IPR003500">
    <property type="entry name" value="RpiB_LacA_LacB"/>
</dbReference>
<dbReference type="InterPro" id="IPR036569">
    <property type="entry name" value="RpiB_LacA_LacB_sf"/>
</dbReference>
<dbReference type="NCBIfam" id="NF006380">
    <property type="entry name" value="PRK08621.1"/>
    <property type="match status" value="1"/>
</dbReference>
<dbReference type="NCBIfam" id="TIGR00689">
    <property type="entry name" value="rpiB_lacA_lacB"/>
    <property type="match status" value="1"/>
</dbReference>
<dbReference type="PANTHER" id="PTHR30345:SF5">
    <property type="entry name" value="GALACTOSE-6-PHOSPHATE ISOMERASE SUBUNIT LACA"/>
    <property type="match status" value="1"/>
</dbReference>
<dbReference type="PANTHER" id="PTHR30345">
    <property type="entry name" value="RIBOSE-5-PHOSPHATE ISOMERASE B"/>
    <property type="match status" value="1"/>
</dbReference>
<dbReference type="Pfam" id="PF02502">
    <property type="entry name" value="LacAB_rpiB"/>
    <property type="match status" value="1"/>
</dbReference>
<dbReference type="PIRSF" id="PIRSF005384">
    <property type="entry name" value="RpiB_LacA_B"/>
    <property type="match status" value="1"/>
</dbReference>
<dbReference type="SUPFAM" id="SSF89623">
    <property type="entry name" value="Ribose/Galactose isomerase RpiB/AlsB"/>
    <property type="match status" value="1"/>
</dbReference>
<reference key="1">
    <citation type="journal article" date="2001" name="J. Bacteriol.">
        <title>Genome sequence and comparative analysis of the solvent-producing bacterium Clostridium acetobutylicum.</title>
        <authorList>
            <person name="Noelling J."/>
            <person name="Breton G."/>
            <person name="Omelchenko M.V."/>
            <person name="Makarova K.S."/>
            <person name="Zeng Q."/>
            <person name="Gibson R."/>
            <person name="Lee H.M."/>
            <person name="Dubois J."/>
            <person name="Qiu D."/>
            <person name="Hitti J."/>
            <person name="Wolf Y.I."/>
            <person name="Tatusov R.L."/>
            <person name="Sabathe F."/>
            <person name="Doucette-Stamm L.A."/>
            <person name="Soucaille P."/>
            <person name="Daly M.J."/>
            <person name="Bennett G.N."/>
            <person name="Koonin E.V."/>
            <person name="Smith D.R."/>
        </authorList>
    </citation>
    <scope>NUCLEOTIDE SEQUENCE [LARGE SCALE GENOMIC DNA]</scope>
    <source>
        <strain>ATCC 824 / DSM 792 / JCM 1419 / IAM 19013 / LMG 5710 / NBRC 13948 / NRRL B-527 / VKM B-1787 / 2291 / W</strain>
    </source>
</reference>
<sequence length="142" mass="15260">MKIAIGADTDGFELKEHLKNYLKSKGIEVIDKTPEKGINLVKSASLVAQAVMNKEADRAVAIDEYGAGSFMVGAKHKGIICAEVSDEHSAKMTSQHNSANMLAIGAGIVGKRLAEGMLDAYIAEKYAGGRHQIRVDMLNKML</sequence>
<evidence type="ECO:0000255" key="1">
    <source>
        <dbReference type="HAMAP-Rule" id="MF_01555"/>
    </source>
</evidence>
<comment type="catalytic activity">
    <reaction evidence="1">
        <text>aldehydo-D-galactose 6-phosphate = keto-D-tagatose 6-phosphate</text>
        <dbReference type="Rhea" id="RHEA:13033"/>
        <dbReference type="ChEBI" id="CHEBI:58255"/>
        <dbReference type="ChEBI" id="CHEBI:134283"/>
        <dbReference type="EC" id="5.3.1.26"/>
    </reaction>
</comment>
<comment type="pathway">
    <text evidence="1">Carbohydrate metabolism; D-galactose 6-phosphate degradation; D-tagatose 6-phosphate from D-galactose 6-phosphate: step 1/1.</text>
</comment>
<comment type="subunit">
    <text evidence="1">Heteromultimeric protein consisting of LacA and LacB.</text>
</comment>
<comment type="similarity">
    <text evidence="1">Belongs to the LacAB/RpiB family.</text>
</comment>
<accession>Q97F01</accession>
<gene>
    <name evidence="1" type="primary">lacA</name>
    <name type="ordered locus">CA_C2954</name>
</gene>
<name>LACA_CLOAB</name>
<feature type="chain" id="PRO_0000208101" description="Galactose-6-phosphate isomerase subunit LacA">
    <location>
        <begin position="1"/>
        <end position="142"/>
    </location>
</feature>
<keyword id="KW-0413">Isomerase</keyword>
<keyword id="KW-0423">Lactose metabolism</keyword>
<keyword id="KW-1185">Reference proteome</keyword>